<keyword id="KW-0025">Alternative splicing</keyword>
<keyword id="KW-1003">Cell membrane</keyword>
<keyword id="KW-0325">Glycoprotein</keyword>
<keyword id="KW-0472">Membrane</keyword>
<keyword id="KW-1267">Proteomics identification</keyword>
<keyword id="KW-1185">Reference proteome</keyword>
<keyword id="KW-0812">Transmembrane</keyword>
<keyword id="KW-1133">Transmembrane helix</keyword>
<protein>
    <recommendedName>
        <fullName evidence="11">Solute carrier family 22 member 13</fullName>
    </recommendedName>
    <alternativeName>
        <fullName evidence="11">Organic anion transporter 10</fullName>
        <shortName evidence="11">OAT10</shortName>
    </alternativeName>
    <alternativeName>
        <fullName evidence="9">Organic cation transporter-like 3</fullName>
        <shortName>ORCTL-3</shortName>
        <shortName evidence="9">ORCTL3</shortName>
    </alternativeName>
</protein>
<name>S22AD_HUMAN</name>
<comment type="function">
    <text evidence="5 6 7 8 14 15">Anion antiporter that mediates the transport of urate, orotate and nicotinate in exchange for organic or inorganic anions (PubMed:18411268, PubMed:31780526, PubMed:35144162, PubMed:35462902). Translocates urate and orotate across the apical membrane of proximal tubule epithelial cells and involved in urate renal reabsorption (PubMed:18411268, PubMed:31780526, PubMed:35144162). Possibly involved in orotate renal reabsorption and nicotinate intestinal reabsorption (PubMed:18411268, PubMed:35144162). Mediates urate uptake by an exchange with organic anions such as (S)-lactate, succinate, glutathione and nicotinate (PubMed:18411268). Urate and orotate transports are Cl(-)-dependent (PubMed:35144162, PubMed:35462902). Shows similar transport characteristics as the urate/orotate renal antiporter SLC22A12/URAT1 and may act as a compensator of SLC22A12/URAT1 in certain conditions (Probable).</text>
</comment>
<comment type="catalytic activity">
    <reaction evidence="5">
        <text>urate(out) + (S)-lactate(in) = urate(in) + (S)-lactate(out)</text>
        <dbReference type="Rhea" id="RHEA:72003"/>
        <dbReference type="ChEBI" id="CHEBI:16651"/>
        <dbReference type="ChEBI" id="CHEBI:17775"/>
    </reaction>
    <physiologicalReaction direction="left-to-right" evidence="13 15">
        <dbReference type="Rhea" id="RHEA:72004"/>
    </physiologicalReaction>
</comment>
<comment type="catalytic activity">
    <reaction evidence="5">
        <text>urate(out) + succinate(in) = urate(in) + succinate(out)</text>
        <dbReference type="Rhea" id="RHEA:72007"/>
        <dbReference type="ChEBI" id="CHEBI:17775"/>
        <dbReference type="ChEBI" id="CHEBI:30031"/>
    </reaction>
    <physiologicalReaction direction="left-to-right" evidence="13 15">
        <dbReference type="Rhea" id="RHEA:72008"/>
    </physiologicalReaction>
</comment>
<comment type="catalytic activity">
    <reaction evidence="5">
        <text>urate(out) + glutathione(in) = urate(in) + glutathione(out)</text>
        <dbReference type="Rhea" id="RHEA:72011"/>
        <dbReference type="ChEBI" id="CHEBI:17775"/>
        <dbReference type="ChEBI" id="CHEBI:57925"/>
    </reaction>
    <physiologicalReaction direction="left-to-right" evidence="13 15">
        <dbReference type="Rhea" id="RHEA:72012"/>
    </physiologicalReaction>
</comment>
<comment type="catalytic activity">
    <reaction evidence="5">
        <text>nicotinate(in) + urate(out) = nicotinate(out) + urate(in)</text>
        <dbReference type="Rhea" id="RHEA:72023"/>
        <dbReference type="ChEBI" id="CHEBI:17775"/>
        <dbReference type="ChEBI" id="CHEBI:32544"/>
    </reaction>
    <physiologicalReaction direction="left-to-right" evidence="13 15">
        <dbReference type="Rhea" id="RHEA:72024"/>
    </physiologicalReaction>
</comment>
<comment type="catalytic activity">
    <reaction evidence="14">
        <text>orotate(out) + a carboxylate(in) = orotate(in) + a carboxylate(out)</text>
        <dbReference type="Rhea" id="RHEA:73487"/>
        <dbReference type="ChEBI" id="CHEBI:29067"/>
        <dbReference type="ChEBI" id="CHEBI:30839"/>
    </reaction>
</comment>
<comment type="biophysicochemical properties">
    <kinetics>
        <KM evidence="8">558 uM for urate (at pH 6.4)</KM>
        <KM evidence="7">36.3 uM for orotate for the high affinity binding site (at pH 7.4)</KM>
        <KM evidence="7">3.65 uM for orotate for the low affinity binding site (at pH 7.4)</KM>
        <KM evidence="5">22 uM for nicotinate in X.laevis oocytes (at pH 5.0)</KM>
        <KM evidence="5">48 uM for nicotinate in Caco-2 cells (at pH 5.0)</KM>
        <Vmax evidence="7">518.0 pmol/min/mg enzyme for urate transport</Vmax>
        <Vmax evidence="7">281.0 pmol/min/mg enzyme for orotate transport for the high affinity component</Vmax>
        <Vmax evidence="7">8.11 pmol/min/mg enzyme for orotate transport for the low affinity component</Vmax>
        <text evidence="7">SLC22A13/OAT10-mediated orotate transport consists of two Km (high and low affinity binding sites) suggesting the presence of two different recognition sites specifically for orotate.</text>
    </kinetics>
    <phDependence>
        <text evidence="5 8">Optimum pH is 6.4 for urate transport (PubMed:35462902). Optimum pH is 5.0 for p-aminohippurate transport (PubMed:18411268).</text>
    </phDependence>
</comment>
<comment type="subcellular location">
    <subcellularLocation>
        <location evidence="5 6 7 8">Apical cell membrane</location>
        <topology evidence="12">Multi-pass membrane protein</topology>
    </subcellularLocation>
</comment>
<comment type="alternative products">
    <event type="alternative splicing"/>
    <isoform>
        <id>Q9Y226-1</id>
        <name>1</name>
        <sequence type="displayed"/>
    </isoform>
    <isoform>
        <id>Q9Y226-2</id>
        <name>2</name>
        <sequence type="described" ref="VSP_017830"/>
    </isoform>
</comment>
<comment type="tissue specificity">
    <text evidence="3 5 6 8">Ubiquitous (PubMed:10072596). Highly expressed in kidneys and to a weaker extent in brain, heart, and intestine (PubMed:18411268). In kidneys, expressed in proximal convoluted tubule (PubMed:18411268, PubMed:31780526, PubMed:35462902). In kidneys, also expressed in cortical collecting duct, whereas glomerulus and thick ascending limb exhibit no expression (PubMed:18411268).</text>
</comment>
<comment type="PTM">
    <text evidence="8">Glycosylated.</text>
</comment>
<comment type="similarity">
    <text evidence="12">Belongs to the major facilitator (TC 2.A.1) superfamily. Organic cation transporter (TC 2.A.1.19) family.</text>
</comment>
<gene>
    <name evidence="16" type="primary">SLC22A13</name>
    <name type="synonym">OCTL1</name>
    <name evidence="9" type="synonym">ORCTL3</name>
</gene>
<evidence type="ECO:0000255" key="1"/>
<evidence type="ECO:0000256" key="2">
    <source>
        <dbReference type="SAM" id="MobiDB-lite"/>
    </source>
</evidence>
<evidence type="ECO:0000269" key="3">
    <source>
    </source>
</evidence>
<evidence type="ECO:0000269" key="4">
    <source>
    </source>
</evidence>
<evidence type="ECO:0000269" key="5">
    <source>
    </source>
</evidence>
<evidence type="ECO:0000269" key="6">
    <source>
    </source>
</evidence>
<evidence type="ECO:0000269" key="7">
    <source>
    </source>
</evidence>
<evidence type="ECO:0000269" key="8">
    <source>
    </source>
</evidence>
<evidence type="ECO:0000303" key="9">
    <source>
    </source>
</evidence>
<evidence type="ECO:0000303" key="10">
    <source>
    </source>
</evidence>
<evidence type="ECO:0000303" key="11">
    <source>
    </source>
</evidence>
<evidence type="ECO:0000305" key="12"/>
<evidence type="ECO:0000305" key="13">
    <source>
    </source>
</evidence>
<evidence type="ECO:0000305" key="14">
    <source>
    </source>
</evidence>
<evidence type="ECO:0000305" key="15">
    <source>
    </source>
</evidence>
<evidence type="ECO:0000312" key="16">
    <source>
        <dbReference type="HGNC" id="HGNC:8494"/>
    </source>
</evidence>
<proteinExistence type="evidence at protein level"/>
<dbReference type="EMBL" id="AB010438">
    <property type="protein sequence ID" value="BAA76350.1"/>
    <property type="molecule type" value="mRNA"/>
</dbReference>
<dbReference type="EMBL" id="AB026898">
    <property type="protein sequence ID" value="BAA77625.1"/>
    <property type="molecule type" value="Genomic_DNA"/>
</dbReference>
<dbReference type="EMBL" id="AK315301">
    <property type="protein sequence ID" value="BAG37706.1"/>
    <property type="molecule type" value="mRNA"/>
</dbReference>
<dbReference type="EMBL" id="CH471055">
    <property type="protein sequence ID" value="EAW64527.1"/>
    <property type="molecule type" value="Genomic_DNA"/>
</dbReference>
<dbReference type="EMBL" id="BC035973">
    <property type="protein sequence ID" value="AAH35973.1"/>
    <property type="molecule type" value="mRNA"/>
</dbReference>
<dbReference type="CCDS" id="CCDS2676.1">
    <molecule id="Q9Y226-1"/>
</dbReference>
<dbReference type="RefSeq" id="NP_004247.2">
    <molecule id="Q9Y226-1"/>
    <property type="nucleotide sequence ID" value="NM_004256.4"/>
</dbReference>
<dbReference type="SMR" id="Q9Y226"/>
<dbReference type="BioGRID" id="114790">
    <property type="interactions" value="4"/>
</dbReference>
<dbReference type="FunCoup" id="Q9Y226">
    <property type="interactions" value="48"/>
</dbReference>
<dbReference type="IntAct" id="Q9Y226">
    <property type="interactions" value="3"/>
</dbReference>
<dbReference type="STRING" id="9606.ENSP00000310241"/>
<dbReference type="TCDB" id="2.A.1.19.17">
    <property type="family name" value="the major facilitator superfamily (mfs)"/>
</dbReference>
<dbReference type="GlyCosmos" id="Q9Y226">
    <property type="glycosylation" value="4 sites, No reported glycans"/>
</dbReference>
<dbReference type="GlyGen" id="Q9Y226">
    <property type="glycosylation" value="5 sites, 1 O-linked glycan (1 site)"/>
</dbReference>
<dbReference type="iPTMnet" id="Q9Y226"/>
<dbReference type="PhosphoSitePlus" id="Q9Y226"/>
<dbReference type="BioMuta" id="SLC22A13"/>
<dbReference type="DMDM" id="91207263"/>
<dbReference type="MassIVE" id="Q9Y226"/>
<dbReference type="PaxDb" id="9606-ENSP00000310241"/>
<dbReference type="PeptideAtlas" id="Q9Y226"/>
<dbReference type="ProteomicsDB" id="85612">
    <molecule id="Q9Y226-1"/>
</dbReference>
<dbReference type="ProteomicsDB" id="85613">
    <molecule id="Q9Y226-2"/>
</dbReference>
<dbReference type="Antibodypedia" id="28559">
    <property type="antibodies" value="64 antibodies from 18 providers"/>
</dbReference>
<dbReference type="DNASU" id="9390"/>
<dbReference type="Ensembl" id="ENST00000311856.9">
    <molecule id="Q9Y226-1"/>
    <property type="protein sequence ID" value="ENSP00000310241.3"/>
    <property type="gene ID" value="ENSG00000172940.13"/>
</dbReference>
<dbReference type="GeneID" id="9390"/>
<dbReference type="KEGG" id="hsa:9390"/>
<dbReference type="MANE-Select" id="ENST00000311856.9">
    <property type="protein sequence ID" value="ENSP00000310241.3"/>
    <property type="RefSeq nucleotide sequence ID" value="NM_004256.4"/>
    <property type="RefSeq protein sequence ID" value="NP_004247.2"/>
</dbReference>
<dbReference type="UCSC" id="uc003chz.4">
    <molecule id="Q9Y226-1"/>
    <property type="organism name" value="human"/>
</dbReference>
<dbReference type="AGR" id="HGNC:8494"/>
<dbReference type="CTD" id="9390"/>
<dbReference type="DisGeNET" id="9390"/>
<dbReference type="GeneCards" id="SLC22A13"/>
<dbReference type="HGNC" id="HGNC:8494">
    <property type="gene designation" value="SLC22A13"/>
</dbReference>
<dbReference type="HPA" id="ENSG00000172940">
    <property type="expression patterns" value="Tissue enriched (kidney)"/>
</dbReference>
<dbReference type="MIM" id="604047">
    <property type="type" value="gene"/>
</dbReference>
<dbReference type="neXtProt" id="NX_Q9Y226"/>
<dbReference type="OpenTargets" id="ENSG00000172940"/>
<dbReference type="PharmGKB" id="PA32814"/>
<dbReference type="VEuPathDB" id="HostDB:ENSG00000172940"/>
<dbReference type="eggNOG" id="KOG0255">
    <property type="taxonomic scope" value="Eukaryota"/>
</dbReference>
<dbReference type="GeneTree" id="ENSGT00940000154607"/>
<dbReference type="HOGENOM" id="CLU_001265_33_3_1"/>
<dbReference type="InParanoid" id="Q9Y226"/>
<dbReference type="OMA" id="WTSIPTI"/>
<dbReference type="OrthoDB" id="5296287at2759"/>
<dbReference type="PAN-GO" id="Q9Y226">
    <property type="GO annotations" value="0 GO annotations based on evolutionary models"/>
</dbReference>
<dbReference type="PhylomeDB" id="Q9Y226"/>
<dbReference type="TreeFam" id="TF315847"/>
<dbReference type="PathwayCommons" id="Q9Y226"/>
<dbReference type="Reactome" id="R-HSA-197264">
    <property type="pathway name" value="Nicotinamide salvaging"/>
</dbReference>
<dbReference type="SignaLink" id="Q9Y226"/>
<dbReference type="BioGRID-ORCS" id="9390">
    <property type="hits" value="9 hits in 1137 CRISPR screens"/>
</dbReference>
<dbReference type="GenomeRNAi" id="9390"/>
<dbReference type="Pharos" id="Q9Y226">
    <property type="development level" value="Tbio"/>
</dbReference>
<dbReference type="PRO" id="PR:Q9Y226"/>
<dbReference type="Proteomes" id="UP000005640">
    <property type="component" value="Chromosome 3"/>
</dbReference>
<dbReference type="RNAct" id="Q9Y226">
    <property type="molecule type" value="protein"/>
</dbReference>
<dbReference type="Bgee" id="ENSG00000172940">
    <property type="expression patterns" value="Expressed in adult mammalian kidney and 37 other cell types or tissues"/>
</dbReference>
<dbReference type="ExpressionAtlas" id="Q9Y226">
    <property type="expression patterns" value="baseline and differential"/>
</dbReference>
<dbReference type="GO" id="GO:0016324">
    <property type="term" value="C:apical plasma membrane"/>
    <property type="evidence" value="ECO:0000314"/>
    <property type="project" value="UniProtKB"/>
</dbReference>
<dbReference type="GO" id="GO:0005783">
    <property type="term" value="C:endoplasmic reticulum"/>
    <property type="evidence" value="ECO:0000314"/>
    <property type="project" value="UniProtKB"/>
</dbReference>
<dbReference type="GO" id="GO:0070062">
    <property type="term" value="C:extracellular exosome"/>
    <property type="evidence" value="ECO:0007005"/>
    <property type="project" value="UniProtKB"/>
</dbReference>
<dbReference type="GO" id="GO:0005794">
    <property type="term" value="C:Golgi apparatus"/>
    <property type="evidence" value="ECO:0000314"/>
    <property type="project" value="UniProtKB"/>
</dbReference>
<dbReference type="GO" id="GO:0005886">
    <property type="term" value="C:plasma membrane"/>
    <property type="evidence" value="ECO:0000314"/>
    <property type="project" value="UniProtKB"/>
</dbReference>
<dbReference type="GO" id="GO:0090416">
    <property type="term" value="F:nicotinate transmembrane transporter activity"/>
    <property type="evidence" value="ECO:0000314"/>
    <property type="project" value="UniProtKB"/>
</dbReference>
<dbReference type="GO" id="GO:0015143">
    <property type="term" value="F:urate transmembrane transporter activity"/>
    <property type="evidence" value="ECO:0000314"/>
    <property type="project" value="UniProtKB"/>
</dbReference>
<dbReference type="GO" id="GO:0045922">
    <property type="term" value="P:negative regulation of fatty acid metabolic process"/>
    <property type="evidence" value="ECO:0000314"/>
    <property type="project" value="UniProtKB"/>
</dbReference>
<dbReference type="GO" id="GO:2001142">
    <property type="term" value="P:nicotinate transport"/>
    <property type="evidence" value="ECO:0000314"/>
    <property type="project" value="UniProtKB"/>
</dbReference>
<dbReference type="GO" id="GO:0002854">
    <property type="term" value="P:positive regulation of T cell mediated cytotoxicity directed against tumor cell target"/>
    <property type="evidence" value="ECO:0000314"/>
    <property type="project" value="UniProtKB"/>
</dbReference>
<dbReference type="GO" id="GO:0015747">
    <property type="term" value="P:urate transport"/>
    <property type="evidence" value="ECO:0000314"/>
    <property type="project" value="UniProtKB"/>
</dbReference>
<dbReference type="CDD" id="cd17374">
    <property type="entry name" value="MFS_OAT"/>
    <property type="match status" value="1"/>
</dbReference>
<dbReference type="FunFam" id="1.20.1250.20:FF:000903">
    <property type="entry name" value="Solute carrier family 22 member 13"/>
    <property type="match status" value="1"/>
</dbReference>
<dbReference type="Gene3D" id="1.20.1250.20">
    <property type="entry name" value="MFS general substrate transporter like domains"/>
    <property type="match status" value="1"/>
</dbReference>
<dbReference type="InterPro" id="IPR020846">
    <property type="entry name" value="MFS_dom"/>
</dbReference>
<dbReference type="InterPro" id="IPR005828">
    <property type="entry name" value="MFS_sugar_transport-like"/>
</dbReference>
<dbReference type="InterPro" id="IPR036259">
    <property type="entry name" value="MFS_trans_sf"/>
</dbReference>
<dbReference type="PANTHER" id="PTHR24064">
    <property type="entry name" value="SOLUTE CARRIER FAMILY 22 MEMBER"/>
    <property type="match status" value="1"/>
</dbReference>
<dbReference type="Pfam" id="PF00083">
    <property type="entry name" value="Sugar_tr"/>
    <property type="match status" value="1"/>
</dbReference>
<dbReference type="SUPFAM" id="SSF103473">
    <property type="entry name" value="MFS general substrate transporter"/>
    <property type="match status" value="1"/>
</dbReference>
<dbReference type="PROSITE" id="PS50850">
    <property type="entry name" value="MFS"/>
    <property type="match status" value="1"/>
</dbReference>
<organism>
    <name type="scientific">Homo sapiens</name>
    <name type="common">Human</name>
    <dbReference type="NCBI Taxonomy" id="9606"/>
    <lineage>
        <taxon>Eukaryota</taxon>
        <taxon>Metazoa</taxon>
        <taxon>Chordata</taxon>
        <taxon>Craniata</taxon>
        <taxon>Vertebrata</taxon>
        <taxon>Euteleostomi</taxon>
        <taxon>Mammalia</taxon>
        <taxon>Eutheria</taxon>
        <taxon>Euarchontoglires</taxon>
        <taxon>Primates</taxon>
        <taxon>Haplorrhini</taxon>
        <taxon>Catarrhini</taxon>
        <taxon>Hominidae</taxon>
        <taxon>Homo</taxon>
    </lineage>
</organism>
<reference key="1">
    <citation type="journal article" date="1998" name="Cytogenet. Cell Genet.">
        <title>Molecular cloning, mapping, and characterization of two novel human genes, ORCTL3 and ORCTL4, bearing homology to organic-cation transporters.</title>
        <authorList>
            <person name="Nishiwaki T."/>
            <person name="Daigo Y."/>
            <person name="Tamari M."/>
            <person name="Fujii Y."/>
            <person name="Nakamura Y."/>
        </authorList>
    </citation>
    <scope>NUCLEOTIDE SEQUENCE [MRNA] (ISOFORM 1)</scope>
    <scope>TISSUE SPECIFICITY</scope>
</reference>
<reference key="2">
    <citation type="journal article" date="1999" name="DNA Res.">
        <title>Characterization of a 1200-kb genomic segment of chromosome 3p22-p21.3.</title>
        <authorList>
            <person name="Daigo Y."/>
            <person name="Isomura M."/>
            <person name="Nishiwaki T."/>
            <person name="Tamari M."/>
            <person name="Ishikawa S."/>
            <person name="Kai M."/>
            <person name="Takeuchi K."/>
            <person name="Yamane Y."/>
            <person name="Hayashi R."/>
            <person name="Minami M."/>
            <person name="Fujino M.A."/>
            <person name="Hojo Y."/>
            <person name="Uchiyama I."/>
            <person name="Takagi T."/>
            <person name="Nakamura Y."/>
        </authorList>
    </citation>
    <scope>NUCLEOTIDE SEQUENCE [GENOMIC DNA]</scope>
</reference>
<reference key="3">
    <citation type="journal article" date="2004" name="Nat. Genet.">
        <title>Complete sequencing and characterization of 21,243 full-length human cDNAs.</title>
        <authorList>
            <person name="Ota T."/>
            <person name="Suzuki Y."/>
            <person name="Nishikawa T."/>
            <person name="Otsuki T."/>
            <person name="Sugiyama T."/>
            <person name="Irie R."/>
            <person name="Wakamatsu A."/>
            <person name="Hayashi K."/>
            <person name="Sato H."/>
            <person name="Nagai K."/>
            <person name="Kimura K."/>
            <person name="Makita H."/>
            <person name="Sekine M."/>
            <person name="Obayashi M."/>
            <person name="Nishi T."/>
            <person name="Shibahara T."/>
            <person name="Tanaka T."/>
            <person name="Ishii S."/>
            <person name="Yamamoto J."/>
            <person name="Saito K."/>
            <person name="Kawai Y."/>
            <person name="Isono Y."/>
            <person name="Nakamura Y."/>
            <person name="Nagahari K."/>
            <person name="Murakami K."/>
            <person name="Yasuda T."/>
            <person name="Iwayanagi T."/>
            <person name="Wagatsuma M."/>
            <person name="Shiratori A."/>
            <person name="Sudo H."/>
            <person name="Hosoiri T."/>
            <person name="Kaku Y."/>
            <person name="Kodaira H."/>
            <person name="Kondo H."/>
            <person name="Sugawara M."/>
            <person name="Takahashi M."/>
            <person name="Kanda K."/>
            <person name="Yokoi T."/>
            <person name="Furuya T."/>
            <person name="Kikkawa E."/>
            <person name="Omura Y."/>
            <person name="Abe K."/>
            <person name="Kamihara K."/>
            <person name="Katsuta N."/>
            <person name="Sato K."/>
            <person name="Tanikawa M."/>
            <person name="Yamazaki M."/>
            <person name="Ninomiya K."/>
            <person name="Ishibashi T."/>
            <person name="Yamashita H."/>
            <person name="Murakawa K."/>
            <person name="Fujimori K."/>
            <person name="Tanai H."/>
            <person name="Kimata M."/>
            <person name="Watanabe M."/>
            <person name="Hiraoka S."/>
            <person name="Chiba Y."/>
            <person name="Ishida S."/>
            <person name="Ono Y."/>
            <person name="Takiguchi S."/>
            <person name="Watanabe S."/>
            <person name="Yosida M."/>
            <person name="Hotuta T."/>
            <person name="Kusano J."/>
            <person name="Kanehori K."/>
            <person name="Takahashi-Fujii A."/>
            <person name="Hara H."/>
            <person name="Tanase T.-O."/>
            <person name="Nomura Y."/>
            <person name="Togiya S."/>
            <person name="Komai F."/>
            <person name="Hara R."/>
            <person name="Takeuchi K."/>
            <person name="Arita M."/>
            <person name="Imose N."/>
            <person name="Musashino K."/>
            <person name="Yuuki H."/>
            <person name="Oshima A."/>
            <person name="Sasaki N."/>
            <person name="Aotsuka S."/>
            <person name="Yoshikawa Y."/>
            <person name="Matsunawa H."/>
            <person name="Ichihara T."/>
            <person name="Shiohata N."/>
            <person name="Sano S."/>
            <person name="Moriya S."/>
            <person name="Momiyama H."/>
            <person name="Satoh N."/>
            <person name="Takami S."/>
            <person name="Terashima Y."/>
            <person name="Suzuki O."/>
            <person name="Nakagawa S."/>
            <person name="Senoh A."/>
            <person name="Mizoguchi H."/>
            <person name="Goto Y."/>
            <person name="Shimizu F."/>
            <person name="Wakebe H."/>
            <person name="Hishigaki H."/>
            <person name="Watanabe T."/>
            <person name="Sugiyama A."/>
            <person name="Takemoto M."/>
            <person name="Kawakami B."/>
            <person name="Yamazaki M."/>
            <person name="Watanabe K."/>
            <person name="Kumagai A."/>
            <person name="Itakura S."/>
            <person name="Fukuzumi Y."/>
            <person name="Fujimori Y."/>
            <person name="Komiyama M."/>
            <person name="Tashiro H."/>
            <person name="Tanigami A."/>
            <person name="Fujiwara T."/>
            <person name="Ono T."/>
            <person name="Yamada K."/>
            <person name="Fujii Y."/>
            <person name="Ozaki K."/>
            <person name="Hirao M."/>
            <person name="Ohmori Y."/>
            <person name="Kawabata A."/>
            <person name="Hikiji T."/>
            <person name="Kobatake N."/>
            <person name="Inagaki H."/>
            <person name="Ikema Y."/>
            <person name="Okamoto S."/>
            <person name="Okitani R."/>
            <person name="Kawakami T."/>
            <person name="Noguchi S."/>
            <person name="Itoh T."/>
            <person name="Shigeta K."/>
            <person name="Senba T."/>
            <person name="Matsumura K."/>
            <person name="Nakajima Y."/>
            <person name="Mizuno T."/>
            <person name="Morinaga M."/>
            <person name="Sasaki M."/>
            <person name="Togashi T."/>
            <person name="Oyama M."/>
            <person name="Hata H."/>
            <person name="Watanabe M."/>
            <person name="Komatsu T."/>
            <person name="Mizushima-Sugano J."/>
            <person name="Satoh T."/>
            <person name="Shirai Y."/>
            <person name="Takahashi Y."/>
            <person name="Nakagawa K."/>
            <person name="Okumura K."/>
            <person name="Nagase T."/>
            <person name="Nomura N."/>
            <person name="Kikuchi H."/>
            <person name="Masuho Y."/>
            <person name="Yamashita R."/>
            <person name="Nakai K."/>
            <person name="Yada T."/>
            <person name="Nakamura Y."/>
            <person name="Ohara O."/>
            <person name="Isogai T."/>
            <person name="Sugano S."/>
        </authorList>
    </citation>
    <scope>NUCLEOTIDE SEQUENCE [LARGE SCALE MRNA] (ISOFORM 1)</scope>
    <source>
        <tissue>Kidney</tissue>
    </source>
</reference>
<reference key="4">
    <citation type="submission" date="2005-07" db="EMBL/GenBank/DDBJ databases">
        <authorList>
            <person name="Mural R.J."/>
            <person name="Istrail S."/>
            <person name="Sutton G.G."/>
            <person name="Florea L."/>
            <person name="Halpern A.L."/>
            <person name="Mobarry C.M."/>
            <person name="Lippert R."/>
            <person name="Walenz B."/>
            <person name="Shatkay H."/>
            <person name="Dew I."/>
            <person name="Miller J.R."/>
            <person name="Flanigan M.J."/>
            <person name="Edwards N.J."/>
            <person name="Bolanos R."/>
            <person name="Fasulo D."/>
            <person name="Halldorsson B.V."/>
            <person name="Hannenhalli S."/>
            <person name="Turner R."/>
            <person name="Yooseph S."/>
            <person name="Lu F."/>
            <person name="Nusskern D.R."/>
            <person name="Shue B.C."/>
            <person name="Zheng X.H."/>
            <person name="Zhong F."/>
            <person name="Delcher A.L."/>
            <person name="Huson D.H."/>
            <person name="Kravitz S.A."/>
            <person name="Mouchard L."/>
            <person name="Reinert K."/>
            <person name="Remington K.A."/>
            <person name="Clark A.G."/>
            <person name="Waterman M.S."/>
            <person name="Eichler E.E."/>
            <person name="Adams M.D."/>
            <person name="Hunkapiller M.W."/>
            <person name="Myers E.W."/>
            <person name="Venter J.C."/>
        </authorList>
    </citation>
    <scope>NUCLEOTIDE SEQUENCE [LARGE SCALE GENOMIC DNA]</scope>
</reference>
<reference key="5">
    <citation type="journal article" date="2004" name="Genome Res.">
        <title>The status, quality, and expansion of the NIH full-length cDNA project: the Mammalian Gene Collection (MGC).</title>
        <authorList>
            <consortium name="The MGC Project Team"/>
        </authorList>
    </citation>
    <scope>NUCLEOTIDE SEQUENCE [LARGE SCALE MRNA] (ISOFORM 2)</scope>
    <scope>VARIANTS ILE-43 AND PHE-443</scope>
    <source>
        <tissue>Kidney</tissue>
    </source>
</reference>
<reference key="6">
    <citation type="journal article" date="2008" name="J. Biol. Chem.">
        <title>Identification of a new urate and high affinity nicotinate transporter, hOAT10 (SLC22A13).</title>
        <authorList>
            <person name="Bahn A."/>
            <person name="Hagos Y."/>
            <person name="Reuter S."/>
            <person name="Balen D."/>
            <person name="Brzica H."/>
            <person name="Krick W."/>
            <person name="Burckhardt B.C."/>
            <person name="Sabolic I."/>
            <person name="Burckhardt G."/>
        </authorList>
    </citation>
    <scope>FUNCTION</scope>
    <scope>TRANSPORTER ACTIVITY</scope>
    <scope>BIOPHYSICOCHEMICAL PROPERTIES</scope>
    <scope>SUBCELLULAR LOCATION</scope>
    <scope>TISSUE SPECIFICITY</scope>
</reference>
<reference key="7">
    <citation type="journal article" date="2022" name="Drug Metab. Pharmacokinet.">
        <title>Functional characterization of human organic anion transporter 10 (OAT10/SLC22A13) as an orotate transporter.</title>
        <authorList>
            <person name="Shinoda Y."/>
            <person name="Yamashiro T."/>
            <person name="Hosooka A."/>
            <person name="Yasujima T."/>
            <person name="Yuasa H."/>
        </authorList>
    </citation>
    <scope>FUNCTION</scope>
    <scope>TRANSPORTER ACTIVITY</scope>
    <scope>BIOPHYSICOCHEMICAL PROPERTIES</scope>
    <scope>SUBCELLULAR LOCATION</scope>
</reference>
<reference key="8">
    <citation type="journal article" date="2020" name="Ann. Rheum. Dis.">
        <title>Dysfunctional missense variant of OAT10/SLC22A13 decreases gout risk and serum uric acid levels.</title>
        <authorList>
            <person name="Higashino T."/>
            <person name="Morimoto K."/>
            <person name="Nakaoka H."/>
            <person name="Toyoda Y."/>
            <person name="Kawamura Y."/>
            <person name="Shimizu S."/>
            <person name="Nakamura T."/>
            <person name="Hosomichi K."/>
            <person name="Nakayama A."/>
            <person name="Ooyama K."/>
            <person name="Ooyama H."/>
            <person name="Shimizu T."/>
            <person name="Ueno M."/>
            <person name="Ito T."/>
            <person name="Tamura T."/>
            <person name="Naito M."/>
            <person name="Nakashima H."/>
            <person name="Kawaguchi M."/>
            <person name="Takao M."/>
            <person name="Kawai Y."/>
            <person name="Osada N."/>
            <person name="Ichida K."/>
            <person name="Yamamoto K."/>
            <person name="Suzuki H."/>
            <person name="Shinomiya N."/>
            <person name="Inoue I."/>
            <person name="Takada T."/>
            <person name="Matsuo H."/>
        </authorList>
    </citation>
    <scope>VARIANT CYS-377</scope>
    <scope>FUNCTION</scope>
    <scope>TRANSPORTER ACTIVITY</scope>
    <scope>TISSUE SPECIFICITY</scope>
    <scope>SUBCELLULAR LOCATION</scope>
    <scope>CHARACTERIZATION OF VARIANT CYS-377</scope>
</reference>
<reference key="9">
    <citation type="journal article" date="2022" name="Front. Pharmacol.">
        <title>OAT10/SLC22A13 Acts as a Renal Urate Re-Absorber: Clinico-Genetic and Functional Analyses With Pharmacological Impacts.</title>
        <authorList>
            <person name="Toyoda Y."/>
            <person name="Kawamura Y."/>
            <person name="Nakayama A."/>
            <person name="Morimoto K."/>
            <person name="Shimizu S."/>
            <person name="Tanahashi Y."/>
            <person name="Tamura T."/>
            <person name="Kondo T."/>
            <person name="Kato Y."/>
            <person name="Ichida K."/>
            <person name="Suzuki H."/>
            <person name="Shinomiya N."/>
            <person name="Kobayashi Y."/>
            <person name="Takada T."/>
            <person name="Matsuo H."/>
        </authorList>
    </citation>
    <scope>VARIANT CYS-377</scope>
    <scope>FUNCTION</scope>
    <scope>TRANSPORTER ACTIVITY</scope>
    <scope>BIOPHYSICOCHEMICAL PROPERTIES</scope>
    <scope>SUBCELLULAR LOCATION</scope>
    <scope>TISSUE SPECIFICITY</scope>
    <scope>CHARACTERIZATION OF VARIANT CYS-377</scope>
    <scope>GLYCOSYLATION</scope>
</reference>
<feature type="chain" id="PRO_0000230782" description="Solute carrier family 22 member 13">
    <location>
        <begin position="1"/>
        <end position="551"/>
    </location>
</feature>
<feature type="topological domain" description="Cytoplasmic" evidence="1">
    <location>
        <begin position="1"/>
        <end position="20"/>
    </location>
</feature>
<feature type="transmembrane region" description="Helical" evidence="1">
    <location>
        <begin position="21"/>
        <end position="41"/>
    </location>
</feature>
<feature type="topological domain" description="Extracellular" evidence="1">
    <location>
        <begin position="42"/>
        <end position="138"/>
    </location>
</feature>
<feature type="transmembrane region" description="Helical" evidence="1">
    <location>
        <begin position="139"/>
        <end position="159"/>
    </location>
</feature>
<feature type="topological domain" description="Cytoplasmic" evidence="1">
    <location>
        <begin position="160"/>
        <end position="167"/>
    </location>
</feature>
<feature type="transmembrane region" description="Helical" evidence="1">
    <location>
        <begin position="168"/>
        <end position="188"/>
    </location>
</feature>
<feature type="topological domain" description="Extracellular" evidence="1">
    <location>
        <begin position="189"/>
        <end position="195"/>
    </location>
</feature>
<feature type="transmembrane region" description="Helical" evidence="1">
    <location>
        <begin position="196"/>
        <end position="216"/>
    </location>
</feature>
<feature type="topological domain" description="Cytoplasmic" evidence="1">
    <location>
        <begin position="217"/>
        <end position="224"/>
    </location>
</feature>
<feature type="transmembrane region" description="Helical" evidence="1">
    <location>
        <begin position="225"/>
        <end position="245"/>
    </location>
</feature>
<feature type="topological domain" description="Extracellular" evidence="1">
    <location>
        <begin position="246"/>
        <end position="251"/>
    </location>
</feature>
<feature type="transmembrane region" description="Helical" evidence="1">
    <location>
        <begin position="252"/>
        <end position="272"/>
    </location>
</feature>
<feature type="topological domain" description="Cytoplasmic" evidence="1">
    <location>
        <begin position="273"/>
        <end position="332"/>
    </location>
</feature>
<feature type="transmembrane region" description="Helical" evidence="1">
    <location>
        <begin position="333"/>
        <end position="353"/>
    </location>
</feature>
<feature type="topological domain" description="Extracellular" evidence="1">
    <location>
        <position position="354"/>
    </location>
</feature>
<feature type="transmembrane region" description="Helical" evidence="1">
    <location>
        <begin position="355"/>
        <end position="375"/>
    </location>
</feature>
<feature type="topological domain" description="Cytoplasmic" evidence="1">
    <location>
        <begin position="376"/>
        <end position="397"/>
    </location>
</feature>
<feature type="transmembrane region" description="Helical" evidence="1">
    <location>
        <begin position="398"/>
        <end position="418"/>
    </location>
</feature>
<feature type="topological domain" description="Extracellular" evidence="1">
    <location>
        <begin position="419"/>
        <end position="427"/>
    </location>
</feature>
<feature type="transmembrane region" description="Helical" evidence="1">
    <location>
        <begin position="428"/>
        <end position="448"/>
    </location>
</feature>
<feature type="topological domain" description="Cytoplasmic" evidence="1">
    <location>
        <begin position="449"/>
        <end position="452"/>
    </location>
</feature>
<feature type="transmembrane region" description="Helical" evidence="1">
    <location>
        <begin position="453"/>
        <end position="473"/>
    </location>
</feature>
<feature type="topological domain" description="Extracellular" evidence="1">
    <location>
        <begin position="474"/>
        <end position="478"/>
    </location>
</feature>
<feature type="transmembrane region" description="Helical" evidence="1">
    <location>
        <begin position="479"/>
        <end position="499"/>
    </location>
</feature>
<feature type="topological domain" description="Cytoplasmic" evidence="1">
    <location>
        <begin position="500"/>
        <end position="551"/>
    </location>
</feature>
<feature type="region of interest" description="Disordered" evidence="2">
    <location>
        <begin position="511"/>
        <end position="551"/>
    </location>
</feature>
<feature type="compositionally biased region" description="Basic and acidic residues" evidence="2">
    <location>
        <begin position="527"/>
        <end position="536"/>
    </location>
</feature>
<feature type="compositionally biased region" description="Polar residues" evidence="2">
    <location>
        <begin position="537"/>
        <end position="551"/>
    </location>
</feature>
<feature type="glycosylation site" description="N-linked (GlcNAc...) asparagine" evidence="1">
    <location>
        <position position="57"/>
    </location>
</feature>
<feature type="glycosylation site" description="N-linked (GlcNAc...) asparagine" evidence="1">
    <location>
        <position position="61"/>
    </location>
</feature>
<feature type="glycosylation site" description="N-linked (GlcNAc...) asparagine" evidence="1">
    <location>
        <position position="92"/>
    </location>
</feature>
<feature type="glycosylation site" description="N-linked (GlcNAc...) asparagine" evidence="1">
    <location>
        <position position="104"/>
    </location>
</feature>
<feature type="splice variant" id="VSP_017830" description="In isoform 2." evidence="10">
    <original>TGMGLVGIFSRIGGILTPLVILLGEYHAALPMLIYGSLPIVAGLLCTLLPETHGQGLKDTLQDLELGPHPRSPKSVPSEKETEAKGRTSSPGVAFVSSTYF</original>
    <variation>AWGWWASSHGSGASSHHL</variation>
    <location>
        <begin position="451"/>
        <end position="551"/>
    </location>
</feature>
<feature type="sequence variant" id="VAR_025787" description="In dbSNP:rs17853496." evidence="4">
    <original>V</original>
    <variation>I</variation>
    <location>
        <position position="43"/>
    </location>
</feature>
<feature type="sequence variant" id="VAR_086737" description="May be associated with a reduced risk for gout; variant carriers have lower serum urate levels and increased renal urate excretion; results in strongly reduced urate transport; no change in SLC22A13/OAT10 protein levels; no change in cellular localization; dbSNP:rs117371763." evidence="6 8">
    <original>R</original>
    <variation>C</variation>
    <location>
        <position position="377"/>
    </location>
</feature>
<feature type="sequence variant" id="VAR_025788" description="In dbSNP:rs17857080." evidence="4">
    <original>L</original>
    <variation>F</variation>
    <location>
        <position position="443"/>
    </location>
</feature>
<feature type="sequence conflict" description="In Ref. 1 and 2." evidence="12" ref="1 2">
    <original>A</original>
    <variation>G</variation>
    <location>
        <position position="146"/>
    </location>
</feature>
<accession>Q9Y226</accession>
<accession>B2RCV9</accession>
<accession>Q8IYG1</accession>
<sequence>MAQFVQVLAEIGDFGRFQIQLLILLCVLNFLSPFYFFAHVFMVLDEPHHCAVAWVKNHTFNLSAAEQLVLSVPLDTAGHPEPCLMFRPPPANASLQDILSHRFNETQPCDMGWEYPENRLPSLKNEFNLVCDRKHLKDTTQSVFMAGLLVGTLMFGPLCDRIGRKATILAQLLLFTLIGLATAFVPSFELYMALRFAVATAVAGLSFSNVTLLTEWVGPSWRTQAVVLAQCNFSLGQMVLAGLAYGFRNWRLLQITGTAPGLLLFFYFWALPESARWLLTRGRMDEAIQLIQKAASVNRRKLSPELMNQLVPEKTGPSGNALDLFRHPQLRKVTLIIFCVWFVDSLGYYGLSLQVGDFGLDVYLTQLIFGAVEVPARCSSIFMMQRFGRKWSQLGTLVLGGLMCIIIIFIPADLPVVVTMLAVVGKMATAAAFTISYVYSAELFPTILRQTGMGLVGIFSRIGGILTPLVILLGEYHAALPMLIYGSLPIVAGLLCTLLPETHGQGLKDTLQDLELGPHPRSPKSVPSEKETEAKGRTSSPGVAFVSSTYF</sequence>